<dbReference type="EC" id="1.18.6.1"/>
<dbReference type="EMBL" id="AJ299453">
    <property type="protein sequence ID" value="CAC27791.1"/>
    <property type="molecule type" value="Genomic_DNA"/>
</dbReference>
<dbReference type="SMR" id="Q9AKT8"/>
<dbReference type="STRING" id="44251.PDUR_06415"/>
<dbReference type="eggNOG" id="COG1348">
    <property type="taxonomic scope" value="Bacteria"/>
</dbReference>
<dbReference type="GO" id="GO:0051539">
    <property type="term" value="F:4 iron, 4 sulfur cluster binding"/>
    <property type="evidence" value="ECO:0007669"/>
    <property type="project" value="UniProtKB-KW"/>
</dbReference>
<dbReference type="GO" id="GO:0005524">
    <property type="term" value="F:ATP binding"/>
    <property type="evidence" value="ECO:0007669"/>
    <property type="project" value="UniProtKB-UniRule"/>
</dbReference>
<dbReference type="GO" id="GO:0046872">
    <property type="term" value="F:metal ion binding"/>
    <property type="evidence" value="ECO:0007669"/>
    <property type="project" value="UniProtKB-KW"/>
</dbReference>
<dbReference type="GO" id="GO:0016163">
    <property type="term" value="F:nitrogenase activity"/>
    <property type="evidence" value="ECO:0007669"/>
    <property type="project" value="UniProtKB-UniRule"/>
</dbReference>
<dbReference type="GO" id="GO:0009399">
    <property type="term" value="P:nitrogen fixation"/>
    <property type="evidence" value="ECO:0007669"/>
    <property type="project" value="UniProtKB-UniRule"/>
</dbReference>
<dbReference type="CDD" id="cd02040">
    <property type="entry name" value="NifH"/>
    <property type="match status" value="1"/>
</dbReference>
<dbReference type="FunFam" id="3.40.50.300:FF:001379">
    <property type="entry name" value="Nitrogenase iron protein 1"/>
    <property type="match status" value="1"/>
</dbReference>
<dbReference type="Gene3D" id="3.40.50.300">
    <property type="entry name" value="P-loop containing nucleotide triphosphate hydrolases"/>
    <property type="match status" value="1"/>
</dbReference>
<dbReference type="HAMAP" id="MF_00533">
    <property type="entry name" value="NifH"/>
    <property type="match status" value="1"/>
</dbReference>
<dbReference type="InterPro" id="IPR030655">
    <property type="entry name" value="NifH/chlL_CS"/>
</dbReference>
<dbReference type="InterPro" id="IPR000392">
    <property type="entry name" value="NifH/frxC"/>
</dbReference>
<dbReference type="InterPro" id="IPR005977">
    <property type="entry name" value="Nitrogenase_Fe_NifH"/>
</dbReference>
<dbReference type="InterPro" id="IPR027417">
    <property type="entry name" value="P-loop_NTPase"/>
</dbReference>
<dbReference type="NCBIfam" id="TIGR01287">
    <property type="entry name" value="nifH"/>
    <property type="match status" value="1"/>
</dbReference>
<dbReference type="PANTHER" id="PTHR42864">
    <property type="entry name" value="LIGHT-INDEPENDENT PROTOCHLOROPHYLLIDE REDUCTASE IRON-SULFUR ATP-BINDING PROTEIN"/>
    <property type="match status" value="1"/>
</dbReference>
<dbReference type="PANTHER" id="PTHR42864:SF2">
    <property type="entry name" value="LIGHT-INDEPENDENT PROTOCHLOROPHYLLIDE REDUCTASE IRON-SULFUR ATP-BINDING PROTEIN"/>
    <property type="match status" value="1"/>
</dbReference>
<dbReference type="Pfam" id="PF00142">
    <property type="entry name" value="Fer4_NifH"/>
    <property type="match status" value="1"/>
</dbReference>
<dbReference type="PIRSF" id="PIRSF000363">
    <property type="entry name" value="Nitrogenase_iron"/>
    <property type="match status" value="1"/>
</dbReference>
<dbReference type="PRINTS" id="PR00091">
    <property type="entry name" value="NITROGNASEII"/>
</dbReference>
<dbReference type="SUPFAM" id="SSF52540">
    <property type="entry name" value="P-loop containing nucleoside triphosphate hydrolases"/>
    <property type="match status" value="1"/>
</dbReference>
<dbReference type="PROSITE" id="PS00746">
    <property type="entry name" value="NIFH_FRXC_1"/>
    <property type="match status" value="1"/>
</dbReference>
<dbReference type="PROSITE" id="PS00692">
    <property type="entry name" value="NIFH_FRXC_2"/>
    <property type="match status" value="1"/>
</dbReference>
<dbReference type="PROSITE" id="PS51026">
    <property type="entry name" value="NIFH_FRXC_3"/>
    <property type="match status" value="1"/>
</dbReference>
<accession>Q9AKT8</accession>
<comment type="function">
    <text evidence="1">The key enzymatic reactions in nitrogen fixation are catalyzed by the nitrogenase complex, which has 2 components: the iron protein and the molybdenum-iron protein.</text>
</comment>
<comment type="catalytic activity">
    <reaction>
        <text>N2 + 8 reduced [2Fe-2S]-[ferredoxin] + 16 ATP + 16 H2O = H2 + 8 oxidized [2Fe-2S]-[ferredoxin] + 2 NH4(+) + 16 ADP + 16 phosphate + 6 H(+)</text>
        <dbReference type="Rhea" id="RHEA:21448"/>
        <dbReference type="Rhea" id="RHEA-COMP:10000"/>
        <dbReference type="Rhea" id="RHEA-COMP:10001"/>
        <dbReference type="ChEBI" id="CHEBI:15377"/>
        <dbReference type="ChEBI" id="CHEBI:15378"/>
        <dbReference type="ChEBI" id="CHEBI:17997"/>
        <dbReference type="ChEBI" id="CHEBI:18276"/>
        <dbReference type="ChEBI" id="CHEBI:28938"/>
        <dbReference type="ChEBI" id="CHEBI:30616"/>
        <dbReference type="ChEBI" id="CHEBI:33737"/>
        <dbReference type="ChEBI" id="CHEBI:33738"/>
        <dbReference type="ChEBI" id="CHEBI:43474"/>
        <dbReference type="ChEBI" id="CHEBI:456216"/>
        <dbReference type="EC" id="1.18.6.1"/>
    </reaction>
</comment>
<comment type="cofactor">
    <cofactor evidence="1">
        <name>[4Fe-4S] cluster</name>
        <dbReference type="ChEBI" id="CHEBI:49883"/>
    </cofactor>
    <text evidence="1">Binds 1 [4Fe-4S] cluster per dimer.</text>
</comment>
<comment type="subunit">
    <text evidence="1">Homodimer.</text>
</comment>
<comment type="PTM">
    <text evidence="1">The reversible ADP-ribosylation of Arg-104 inactivates the nitrogenase reductase and regulates nitrogenase activity.</text>
</comment>
<comment type="similarity">
    <text evidence="3">Belongs to the NifH/BchL/ChlL family.</text>
</comment>
<protein>
    <recommendedName>
        <fullName>Nitrogenase iron protein 1</fullName>
        <ecNumber>1.18.6.1</ecNumber>
    </recommendedName>
    <alternativeName>
        <fullName>Nitrogenase Fe protein 1</fullName>
    </alternativeName>
    <alternativeName>
        <fullName>Nitrogenase component II</fullName>
    </alternativeName>
    <alternativeName>
        <fullName>Nitrogenase reductase</fullName>
    </alternativeName>
</protein>
<proteinExistence type="inferred from homology"/>
<evidence type="ECO:0000250" key="1"/>
<evidence type="ECO:0000255" key="2"/>
<evidence type="ECO:0000305" key="3"/>
<organism>
    <name type="scientific">Paenibacillus durus</name>
    <name type="common">Paenibacillus azotofixans</name>
    <dbReference type="NCBI Taxonomy" id="44251"/>
    <lineage>
        <taxon>Bacteria</taxon>
        <taxon>Bacillati</taxon>
        <taxon>Bacillota</taxon>
        <taxon>Bacilli</taxon>
        <taxon>Bacillales</taxon>
        <taxon>Paenibacillaceae</taxon>
        <taxon>Paenibacillus</taxon>
    </lineage>
</organism>
<feature type="chain" id="PRO_0000139518" description="Nitrogenase iron protein 1">
    <location>
        <begin position="1"/>
        <end position="292"/>
    </location>
</feature>
<feature type="binding site" evidence="2">
    <location>
        <begin position="12"/>
        <end position="19"/>
    </location>
    <ligand>
        <name>ATP</name>
        <dbReference type="ChEBI" id="CHEBI:30616"/>
    </ligand>
</feature>
<feature type="binding site" evidence="1">
    <location>
        <position position="101"/>
    </location>
    <ligand>
        <name>[4Fe-4S] cluster</name>
        <dbReference type="ChEBI" id="CHEBI:49883"/>
        <note>ligand shared between dimeric partners</note>
    </ligand>
</feature>
<feature type="binding site" evidence="1">
    <location>
        <position position="135"/>
    </location>
    <ligand>
        <name>[4Fe-4S] cluster</name>
        <dbReference type="ChEBI" id="CHEBI:49883"/>
        <note>ligand shared between dimeric partners</note>
    </ligand>
</feature>
<feature type="modified residue" description="ADP-ribosylarginine; by dinitrogenase reductase ADP-ribosyltransferase" evidence="1">
    <location>
        <position position="104"/>
    </location>
</feature>
<keyword id="KW-0004">4Fe-4S</keyword>
<keyword id="KW-0013">ADP-ribosylation</keyword>
<keyword id="KW-0067">ATP-binding</keyword>
<keyword id="KW-0408">Iron</keyword>
<keyword id="KW-0411">Iron-sulfur</keyword>
<keyword id="KW-0479">Metal-binding</keyword>
<keyword id="KW-0535">Nitrogen fixation</keyword>
<keyword id="KW-0547">Nucleotide-binding</keyword>
<keyword id="KW-0560">Oxidoreductase</keyword>
<gene>
    <name type="primary">nifH1</name>
    <name type="synonym">nifH</name>
</gene>
<name>NIFH1_PAEDU</name>
<sequence length="292" mass="31921">MSKKPRQIAFYGKGGIGKSTTSQNTLAQLATTFGQKIMIVGCDPKADSTRLILNTKAQQTVLHLAAELGSVEDLELEDVVATGFGGILCVESGGPEPGVGCAGRGIITSINFLEEQGAYDGMDFISYDVLGDVVCGGFAMPIRENKAQEIYIVCSGEMMAMYAANNIARGILKYAQSGSVRLGGLICNSRKTDREDELITELARRLNTQMIHFVPRDNVVQHAELRRMTVTQYNPEHPQANEYKQLADKILHNEKLTIPTPIEMDELEQLLIDFGVVEDEETAIKKLEAAGH</sequence>
<reference key="1">
    <citation type="submission" date="2000-10" db="EMBL/GenBank/DDBJ databases">
        <title>Cloning, DNA sequencing and phylogeny of two nifH-homologous genes from Paenibacillus azotofixans.</title>
        <authorList>
            <person name="Choo Q.C."/>
            <person name="Othman A.S."/>
            <person name="Samian M.R."/>
            <person name="Najimudin N."/>
        </authorList>
    </citation>
    <scope>NUCLEOTIDE SEQUENCE [GENOMIC DNA]</scope>
    <source>
        <strain>ATCC 35681 / DSM 5976 / BCRC 15905 / LMG 14658 / NBRC 16645 / NCIMB 12093 / NRRL B-14372 / P3L-5</strain>
    </source>
</reference>